<organism>
    <name type="scientific">Gallus gallus</name>
    <name type="common">Chicken</name>
    <dbReference type="NCBI Taxonomy" id="9031"/>
    <lineage>
        <taxon>Eukaryota</taxon>
        <taxon>Metazoa</taxon>
        <taxon>Chordata</taxon>
        <taxon>Craniata</taxon>
        <taxon>Vertebrata</taxon>
        <taxon>Euteleostomi</taxon>
        <taxon>Archelosauria</taxon>
        <taxon>Archosauria</taxon>
        <taxon>Dinosauria</taxon>
        <taxon>Saurischia</taxon>
        <taxon>Theropoda</taxon>
        <taxon>Coelurosauria</taxon>
        <taxon>Aves</taxon>
        <taxon>Neognathae</taxon>
        <taxon>Galloanserae</taxon>
        <taxon>Galliformes</taxon>
        <taxon>Phasianidae</taxon>
        <taxon>Phasianinae</taxon>
        <taxon>Gallus</taxon>
    </lineage>
</organism>
<keyword id="KW-0025">Alternative splicing</keyword>
<keyword id="KW-0217">Developmental protein</keyword>
<keyword id="KW-1015">Disulfide bond</keyword>
<keyword id="KW-0272">Extracellular matrix</keyword>
<keyword id="KW-0325">Glycoprotein</keyword>
<keyword id="KW-0449">Lipoprotein</keyword>
<keyword id="KW-1185">Reference proteome</keyword>
<keyword id="KW-0964">Secreted</keyword>
<keyword id="KW-0732">Signal</keyword>
<keyword id="KW-0879">Wnt signaling pathway</keyword>
<feature type="signal peptide" evidence="6">
    <location>
        <begin position="1"/>
        <end position="24"/>
    </location>
</feature>
<feature type="chain" id="PRO_0000392674" description="Protein Wnt-7b">
    <location>
        <begin position="25"/>
        <end position="349"/>
    </location>
</feature>
<feature type="region of interest" description="Disordered linker" evidence="5">
    <location>
        <begin position="238"/>
        <end position="266"/>
    </location>
</feature>
<feature type="lipid moiety-binding region" description="O-palmitoleoyl serine; by PORCN" evidence="4">
    <location>
        <position position="206"/>
    </location>
</feature>
<feature type="glycosylation site" description="N-linked (GlcNAc...) asparagine" evidence="6">
    <location>
        <position position="83"/>
    </location>
</feature>
<feature type="glycosylation site" description="N-linked (GlcNAc...) asparagine" evidence="6">
    <location>
        <position position="127"/>
    </location>
</feature>
<feature type="glycosylation site" description="N-linked (GlcNAc...) asparagine" evidence="6">
    <location>
        <position position="295"/>
    </location>
</feature>
<feature type="disulfide bond" evidence="2">
    <location>
        <begin position="73"/>
        <end position="84"/>
    </location>
</feature>
<feature type="disulfide bond" evidence="2">
    <location>
        <begin position="123"/>
        <end position="131"/>
    </location>
</feature>
<feature type="disulfide bond" evidence="2">
    <location>
        <begin position="133"/>
        <end position="152"/>
    </location>
</feature>
<feature type="disulfide bond" evidence="2">
    <location>
        <begin position="200"/>
        <end position="214"/>
    </location>
</feature>
<feature type="disulfide bond" evidence="2">
    <location>
        <begin position="202"/>
        <end position="209"/>
    </location>
</feature>
<feature type="disulfide bond" evidence="2">
    <location>
        <begin position="278"/>
        <end position="309"/>
    </location>
</feature>
<feature type="disulfide bond" evidence="2">
    <location>
        <begin position="294"/>
        <end position="304"/>
    </location>
</feature>
<feature type="disulfide bond" evidence="2">
    <location>
        <begin position="308"/>
        <end position="348"/>
    </location>
</feature>
<feature type="disulfide bond" evidence="2">
    <location>
        <begin position="324"/>
        <end position="339"/>
    </location>
</feature>
<feature type="disulfide bond" evidence="2">
    <location>
        <begin position="326"/>
        <end position="336"/>
    </location>
</feature>
<feature type="disulfide bond" evidence="2">
    <location>
        <begin position="331"/>
        <end position="332"/>
    </location>
</feature>
<feature type="splice variant" id="VSP_038847" description="In isoform 2." evidence="9">
    <original>MHRNFRKWIFYVFLCFGVIYVKLG</original>
    <variation>MILFSSRSVLLSVYYPQIFLILTSGSYL</variation>
    <location>
        <begin position="1"/>
        <end position="24"/>
    </location>
</feature>
<protein>
    <recommendedName>
        <fullName>Protein Wnt-7b</fullName>
    </recommendedName>
</protein>
<gene>
    <name type="primary">WNT7B</name>
</gene>
<dbReference type="EMBL" id="AY753290">
    <property type="protein sequence ID" value="AAW81992.1"/>
    <property type="molecule type" value="mRNA"/>
</dbReference>
<dbReference type="EMBL" id="AY753291">
    <property type="protein sequence ID" value="AAW81993.1"/>
    <property type="molecule type" value="mRNA"/>
</dbReference>
<dbReference type="RefSeq" id="NP_001032351.1">
    <molecule id="Q3L254-1"/>
    <property type="nucleotide sequence ID" value="NM_001037274.2"/>
</dbReference>
<dbReference type="RefSeq" id="NP_001165064.1">
    <molecule id="Q3L254-2"/>
    <property type="nucleotide sequence ID" value="NM_001171593.2"/>
</dbReference>
<dbReference type="SMR" id="Q3L254"/>
<dbReference type="FunCoup" id="Q3L254">
    <property type="interactions" value="119"/>
</dbReference>
<dbReference type="STRING" id="9031.ENSGALP00000046960"/>
<dbReference type="GlyCosmos" id="Q3L254">
    <property type="glycosylation" value="3 sites, No reported glycans"/>
</dbReference>
<dbReference type="GlyGen" id="Q3L254">
    <property type="glycosylation" value="4 sites"/>
</dbReference>
<dbReference type="PaxDb" id="9031-ENSGALP00000041983"/>
<dbReference type="Ensembl" id="ENSGALT00010029629.1">
    <molecule id="Q3L254-2"/>
    <property type="protein sequence ID" value="ENSGALP00010017240.1"/>
    <property type="gene ID" value="ENSGALG00010012373.1"/>
</dbReference>
<dbReference type="Ensembl" id="ENSGALT00010029634.1">
    <molecule id="Q3L254-1"/>
    <property type="protein sequence ID" value="ENSGALP00010017243.1"/>
    <property type="gene ID" value="ENSGALG00010012373.1"/>
</dbReference>
<dbReference type="GeneID" id="427937"/>
<dbReference type="KEGG" id="gga:427937"/>
<dbReference type="CTD" id="7477"/>
<dbReference type="VEuPathDB" id="HostDB:geneid_427937"/>
<dbReference type="eggNOG" id="KOG3913">
    <property type="taxonomic scope" value="Eukaryota"/>
</dbReference>
<dbReference type="GeneTree" id="ENSGT00940000158861"/>
<dbReference type="InParanoid" id="Q3L254"/>
<dbReference type="OMA" id="CKVHCET"/>
<dbReference type="OrthoDB" id="5945655at2759"/>
<dbReference type="PhylomeDB" id="Q3L254"/>
<dbReference type="TreeFam" id="TF105310"/>
<dbReference type="Reactome" id="R-GGA-3238698">
    <property type="pathway name" value="WNT ligand biogenesis and trafficking"/>
</dbReference>
<dbReference type="PRO" id="PR:Q3L254"/>
<dbReference type="Proteomes" id="UP000000539">
    <property type="component" value="Chromosome 1"/>
</dbReference>
<dbReference type="Bgee" id="ENSGALG00000036255">
    <property type="expression patterns" value="Expressed in cerebellum and 1 other cell type or tissue"/>
</dbReference>
<dbReference type="GO" id="GO:0005615">
    <property type="term" value="C:extracellular space"/>
    <property type="evidence" value="ECO:0000318"/>
    <property type="project" value="GO_Central"/>
</dbReference>
<dbReference type="GO" id="GO:0005125">
    <property type="term" value="F:cytokine activity"/>
    <property type="evidence" value="ECO:0000318"/>
    <property type="project" value="GO_Central"/>
</dbReference>
<dbReference type="GO" id="GO:0005109">
    <property type="term" value="F:frizzled binding"/>
    <property type="evidence" value="ECO:0000318"/>
    <property type="project" value="GO_Central"/>
</dbReference>
<dbReference type="GO" id="GO:0060070">
    <property type="term" value="P:canonical Wnt signaling pathway"/>
    <property type="evidence" value="ECO:0000318"/>
    <property type="project" value="GO_Central"/>
</dbReference>
<dbReference type="GO" id="GO:0045165">
    <property type="term" value="P:cell fate commitment"/>
    <property type="evidence" value="ECO:0000318"/>
    <property type="project" value="GO_Central"/>
</dbReference>
<dbReference type="GO" id="GO:0071300">
    <property type="term" value="P:cellular response to retinoic acid"/>
    <property type="evidence" value="ECO:0007669"/>
    <property type="project" value="Ensembl"/>
</dbReference>
<dbReference type="GO" id="GO:0048144">
    <property type="term" value="P:fibroblast proliferation"/>
    <property type="evidence" value="ECO:0007669"/>
    <property type="project" value="Ensembl"/>
</dbReference>
<dbReference type="GO" id="GO:0021871">
    <property type="term" value="P:forebrain regionalization"/>
    <property type="evidence" value="ECO:0007669"/>
    <property type="project" value="Ensembl"/>
</dbReference>
<dbReference type="GO" id="GO:0070307">
    <property type="term" value="P:lens fiber cell development"/>
    <property type="evidence" value="ECO:0000270"/>
    <property type="project" value="BHF-UCL"/>
</dbReference>
<dbReference type="GO" id="GO:0030182">
    <property type="term" value="P:neuron differentiation"/>
    <property type="evidence" value="ECO:0000318"/>
    <property type="project" value="GO_Central"/>
</dbReference>
<dbReference type="GO" id="GO:0046330">
    <property type="term" value="P:positive regulation of JNK cascade"/>
    <property type="evidence" value="ECO:0000318"/>
    <property type="project" value="GO_Central"/>
</dbReference>
<dbReference type="GO" id="GO:0072089">
    <property type="term" value="P:stem cell proliferation"/>
    <property type="evidence" value="ECO:0007669"/>
    <property type="project" value="Ensembl"/>
</dbReference>
<dbReference type="CDD" id="cd19350">
    <property type="entry name" value="wnt_Wnt7b"/>
    <property type="match status" value="1"/>
</dbReference>
<dbReference type="FunFam" id="3.30.2460.20:FF:000001">
    <property type="entry name" value="Wnt homolog"/>
    <property type="match status" value="1"/>
</dbReference>
<dbReference type="Gene3D" id="3.30.2460.20">
    <property type="match status" value="1"/>
</dbReference>
<dbReference type="InterPro" id="IPR005817">
    <property type="entry name" value="Wnt"/>
</dbReference>
<dbReference type="InterPro" id="IPR013300">
    <property type="entry name" value="Wnt7"/>
</dbReference>
<dbReference type="InterPro" id="IPR043158">
    <property type="entry name" value="Wnt_C"/>
</dbReference>
<dbReference type="InterPro" id="IPR018161">
    <property type="entry name" value="Wnt_CS"/>
</dbReference>
<dbReference type="PANTHER" id="PTHR12027:SF73">
    <property type="entry name" value="PROTEIN WNT-7B"/>
    <property type="match status" value="1"/>
</dbReference>
<dbReference type="PANTHER" id="PTHR12027">
    <property type="entry name" value="WNT RELATED"/>
    <property type="match status" value="1"/>
</dbReference>
<dbReference type="Pfam" id="PF00110">
    <property type="entry name" value="wnt"/>
    <property type="match status" value="1"/>
</dbReference>
<dbReference type="PRINTS" id="PR01891">
    <property type="entry name" value="WNT7PROTEIN"/>
</dbReference>
<dbReference type="PRINTS" id="PR01349">
    <property type="entry name" value="WNTPROTEIN"/>
</dbReference>
<dbReference type="SMART" id="SM00097">
    <property type="entry name" value="WNT1"/>
    <property type="match status" value="1"/>
</dbReference>
<dbReference type="PROSITE" id="PS00246">
    <property type="entry name" value="WNT1"/>
    <property type="match status" value="1"/>
</dbReference>
<name>WNT7B_CHICK</name>
<accession>Q3L254</accession>
<accession>Q3L253</accession>
<reference key="1">
    <citation type="journal article" date="2006" name="Dev. Dyn.">
        <title>Expression patterns of Wnt genes during development of an anterior part of the chicken eye.</title>
        <authorList>
            <person name="Fokina V.M."/>
            <person name="Frolova E.I."/>
        </authorList>
    </citation>
    <scope>NUCLEOTIDE SEQUENCE [MRNA] (ISOFORMS 1 AND 2)</scope>
    <scope>TISSUE SPECIFICITY</scope>
</reference>
<reference key="2">
    <citation type="journal article" date="1995" name="Mech. Dev.">
        <title>Wnt expression patterns in chick embryo nervous system.</title>
        <authorList>
            <person name="Hollyday M."/>
            <person name="McMahon J.A."/>
            <person name="McMahon A.P."/>
        </authorList>
    </citation>
    <scope>ALTERNATIVE SPLICING (ISOFORMS 1 AND 2)</scope>
    <scope>DEVELOPMENTAL STAGE</scope>
</reference>
<comment type="function">
    <text evidence="3 5">Ligand for members of the frizzled family of seven transmembrane receptors that functions in the canonical Wnt/beta-catenin signaling pathway (By similarity). Required for normal fusion of the chorion and the allantois during placenta development (By similarity). Required for central nervous system (CNS) angiogenesis and blood-brain barrier regulation (By similarity).</text>
</comment>
<comment type="subcellular location">
    <subcellularLocation>
        <location evidence="5">Secreted</location>
        <location evidence="5">Extracellular space</location>
        <location evidence="5">Extracellular matrix</location>
    </subcellularLocation>
    <subcellularLocation>
        <location evidence="5">Secreted</location>
    </subcellularLocation>
</comment>
<comment type="alternative products">
    <event type="alternative splicing"/>
    <isoform>
        <id>Q3L254-1</id>
        <name>1</name>
        <sequence type="displayed"/>
    </isoform>
    <isoform>
        <id>Q3L254-2</id>
        <name>2</name>
        <sequence type="described" ref="VSP_038847"/>
    </isoform>
</comment>
<comment type="tissue specificity">
    <text evidence="7">Expressed in differentiating lens fiber cells.</text>
</comment>
<comment type="developmental stage">
    <text evidence="8">Detected in the anterior parencephalon and secondary prosencephalon at stages 20 and 24. Expressed in the ventricular epithelium of the spinal cord at the latest stages.</text>
</comment>
<comment type="PTM">
    <text evidence="1 4">Palmitoleoylation is required for efficient binding to frizzled receptors. Depalmitoleoylation leads to Wnt signaling pathway inhibition.</text>
</comment>
<comment type="miscellaneous">
    <molecule>Isoform 2</molecule>
    <text evidence="10">Produced by alternative splicing.</text>
</comment>
<comment type="similarity">
    <text evidence="10">Belongs to the Wnt family.</text>
</comment>
<sequence length="349" mass="39530">MHRNFRKWIFYVFLCFGVIYVKLGALSSVVALGANIICNKIPGLAPRQRAICQSRPDAIIVIGEGAQMGINECQYQFRYGRWNCSALGEKTVFGQELRVGSREAAFTYAITAAGVAHAVTAACSQGNLSNCGCDREKQGYYNQEEGWKWGGCSADIRYGIEFSRRFVDAREIKKNARRLMNLHNNEAGRKVLEERMKLECKCHGVSGSCTTKTCWTTLPKFREIGYILKEKYNAAVQVEVVRASRLRQPTFLKIKQIKSYQKPMETDLVYIEKSPNYCEEDASTGSVGTQGRLCNRTSPNADGCDMMCCGRGYNTHQYTKVWQCNCKFHWCCFVKCNTCSERTEVFTCK</sequence>
<proteinExistence type="evidence at transcript level"/>
<evidence type="ECO:0000250" key="1">
    <source>
        <dbReference type="UniProtKB" id="P27467"/>
    </source>
</evidence>
<evidence type="ECO:0000250" key="2">
    <source>
        <dbReference type="UniProtKB" id="P28026"/>
    </source>
</evidence>
<evidence type="ECO:0000250" key="3">
    <source>
        <dbReference type="UniProtKB" id="P28047"/>
    </source>
</evidence>
<evidence type="ECO:0000250" key="4">
    <source>
        <dbReference type="UniProtKB" id="P56704"/>
    </source>
</evidence>
<evidence type="ECO:0000250" key="5">
    <source>
        <dbReference type="UniProtKB" id="P56706"/>
    </source>
</evidence>
<evidence type="ECO:0000255" key="6"/>
<evidence type="ECO:0000269" key="7">
    <source>
    </source>
</evidence>
<evidence type="ECO:0000269" key="8">
    <source>
    </source>
</evidence>
<evidence type="ECO:0000303" key="9">
    <source>
    </source>
</evidence>
<evidence type="ECO:0000305" key="10"/>